<gene>
    <name evidence="1" type="primary">acpP</name>
    <name type="ordered locus">DMR_39970</name>
</gene>
<protein>
    <recommendedName>
        <fullName evidence="1">Acyl carrier protein</fullName>
        <shortName evidence="1">ACP</shortName>
    </recommendedName>
</protein>
<accession>C4XNY7</accession>
<evidence type="ECO:0000255" key="1">
    <source>
        <dbReference type="HAMAP-Rule" id="MF_01217"/>
    </source>
</evidence>
<evidence type="ECO:0000255" key="2">
    <source>
        <dbReference type="PROSITE-ProRule" id="PRU00258"/>
    </source>
</evidence>
<keyword id="KW-0963">Cytoplasm</keyword>
<keyword id="KW-0275">Fatty acid biosynthesis</keyword>
<keyword id="KW-0276">Fatty acid metabolism</keyword>
<keyword id="KW-0444">Lipid biosynthesis</keyword>
<keyword id="KW-0443">Lipid metabolism</keyword>
<keyword id="KW-0596">Phosphopantetheine</keyword>
<keyword id="KW-0597">Phosphoprotein</keyword>
<proteinExistence type="inferred from homology"/>
<feature type="chain" id="PRO_1000213906" description="Acyl carrier protein">
    <location>
        <begin position="1"/>
        <end position="78"/>
    </location>
</feature>
<feature type="domain" description="Carrier" evidence="2">
    <location>
        <begin position="1"/>
        <end position="76"/>
    </location>
</feature>
<feature type="modified residue" description="O-(pantetheine 4'-phosphoryl)serine" evidence="2">
    <location>
        <position position="36"/>
    </location>
</feature>
<dbReference type="EMBL" id="AP010904">
    <property type="protein sequence ID" value="BAH77488.1"/>
    <property type="molecule type" value="Genomic_DNA"/>
</dbReference>
<dbReference type="RefSeq" id="WP_006917960.1">
    <property type="nucleotide sequence ID" value="NC_012796.1"/>
</dbReference>
<dbReference type="SMR" id="C4XNY7"/>
<dbReference type="STRING" id="573370.DMR_39970"/>
<dbReference type="KEGG" id="dma:DMR_39970"/>
<dbReference type="eggNOG" id="COG0236">
    <property type="taxonomic scope" value="Bacteria"/>
</dbReference>
<dbReference type="HOGENOM" id="CLU_108696_5_1_7"/>
<dbReference type="OrthoDB" id="9804551at2"/>
<dbReference type="UniPathway" id="UPA00094"/>
<dbReference type="Proteomes" id="UP000009071">
    <property type="component" value="Chromosome"/>
</dbReference>
<dbReference type="GO" id="GO:0005829">
    <property type="term" value="C:cytosol"/>
    <property type="evidence" value="ECO:0007669"/>
    <property type="project" value="TreeGrafter"/>
</dbReference>
<dbReference type="GO" id="GO:0016020">
    <property type="term" value="C:membrane"/>
    <property type="evidence" value="ECO:0007669"/>
    <property type="project" value="GOC"/>
</dbReference>
<dbReference type="GO" id="GO:0000035">
    <property type="term" value="F:acyl binding"/>
    <property type="evidence" value="ECO:0007669"/>
    <property type="project" value="TreeGrafter"/>
</dbReference>
<dbReference type="GO" id="GO:0000036">
    <property type="term" value="F:acyl carrier activity"/>
    <property type="evidence" value="ECO:0007669"/>
    <property type="project" value="UniProtKB-UniRule"/>
</dbReference>
<dbReference type="GO" id="GO:0031177">
    <property type="term" value="F:phosphopantetheine binding"/>
    <property type="evidence" value="ECO:0007669"/>
    <property type="project" value="InterPro"/>
</dbReference>
<dbReference type="GO" id="GO:0009245">
    <property type="term" value="P:lipid A biosynthetic process"/>
    <property type="evidence" value="ECO:0007669"/>
    <property type="project" value="TreeGrafter"/>
</dbReference>
<dbReference type="FunFam" id="1.10.1200.10:FF:000001">
    <property type="entry name" value="Acyl carrier protein"/>
    <property type="match status" value="1"/>
</dbReference>
<dbReference type="Gene3D" id="1.10.1200.10">
    <property type="entry name" value="ACP-like"/>
    <property type="match status" value="1"/>
</dbReference>
<dbReference type="HAMAP" id="MF_01217">
    <property type="entry name" value="Acyl_carrier"/>
    <property type="match status" value="1"/>
</dbReference>
<dbReference type="InterPro" id="IPR003231">
    <property type="entry name" value="ACP"/>
</dbReference>
<dbReference type="InterPro" id="IPR036736">
    <property type="entry name" value="ACP-like_sf"/>
</dbReference>
<dbReference type="InterPro" id="IPR020806">
    <property type="entry name" value="PKS_PP-bd"/>
</dbReference>
<dbReference type="InterPro" id="IPR009081">
    <property type="entry name" value="PP-bd_ACP"/>
</dbReference>
<dbReference type="InterPro" id="IPR006162">
    <property type="entry name" value="Ppantetheine_attach_site"/>
</dbReference>
<dbReference type="NCBIfam" id="TIGR00517">
    <property type="entry name" value="acyl_carrier"/>
    <property type="match status" value="1"/>
</dbReference>
<dbReference type="NCBIfam" id="NF002148">
    <property type="entry name" value="PRK00982.1-2"/>
    <property type="match status" value="1"/>
</dbReference>
<dbReference type="NCBIfam" id="NF002150">
    <property type="entry name" value="PRK00982.1-4"/>
    <property type="match status" value="1"/>
</dbReference>
<dbReference type="NCBIfam" id="NF002151">
    <property type="entry name" value="PRK00982.1-5"/>
    <property type="match status" value="1"/>
</dbReference>
<dbReference type="PANTHER" id="PTHR20863">
    <property type="entry name" value="ACYL CARRIER PROTEIN"/>
    <property type="match status" value="1"/>
</dbReference>
<dbReference type="PANTHER" id="PTHR20863:SF76">
    <property type="entry name" value="CARRIER DOMAIN-CONTAINING PROTEIN"/>
    <property type="match status" value="1"/>
</dbReference>
<dbReference type="Pfam" id="PF00550">
    <property type="entry name" value="PP-binding"/>
    <property type="match status" value="1"/>
</dbReference>
<dbReference type="SMART" id="SM00823">
    <property type="entry name" value="PKS_PP"/>
    <property type="match status" value="1"/>
</dbReference>
<dbReference type="SUPFAM" id="SSF47336">
    <property type="entry name" value="ACP-like"/>
    <property type="match status" value="1"/>
</dbReference>
<dbReference type="PROSITE" id="PS50075">
    <property type="entry name" value="CARRIER"/>
    <property type="match status" value="1"/>
</dbReference>
<dbReference type="PROSITE" id="PS00012">
    <property type="entry name" value="PHOSPHOPANTETHEINE"/>
    <property type="match status" value="1"/>
</dbReference>
<name>ACP_SOLM1</name>
<reference key="1">
    <citation type="journal article" date="2009" name="Genome Res.">
        <title>Whole genome sequence of Desulfovibrio magneticus strain RS-1 revealed common gene clusters in magnetotactic bacteria.</title>
        <authorList>
            <person name="Nakazawa H."/>
            <person name="Arakaki A."/>
            <person name="Narita-Yamada S."/>
            <person name="Yashiro I."/>
            <person name="Jinno K."/>
            <person name="Aoki N."/>
            <person name="Tsuruyama A."/>
            <person name="Okamura Y."/>
            <person name="Tanikawa S."/>
            <person name="Fujita N."/>
            <person name="Takeyama H."/>
            <person name="Matsunaga T."/>
        </authorList>
    </citation>
    <scope>NUCLEOTIDE SEQUENCE [LARGE SCALE GENOMIC DNA]</scope>
    <source>
        <strain>ATCC 700980 / DSM 13731 / RS-1</strain>
    </source>
</reference>
<organism>
    <name type="scientific">Solidesulfovibrio magneticus (strain ATCC 700980 / DSM 13731 / RS-1)</name>
    <name type="common">Desulfovibrio magneticus</name>
    <dbReference type="NCBI Taxonomy" id="573370"/>
    <lineage>
        <taxon>Bacteria</taxon>
        <taxon>Pseudomonadati</taxon>
        <taxon>Thermodesulfobacteriota</taxon>
        <taxon>Desulfovibrionia</taxon>
        <taxon>Desulfovibrionales</taxon>
        <taxon>Desulfovibrionaceae</taxon>
        <taxon>Solidesulfovibrio</taxon>
    </lineage>
</organism>
<sequence>MSVAEKVKEIIVDQLGVDAAEVNPDAKFVDDLGADSLDLTELIMAMEEEFGVEISDEDAQQIQKVQDAISFIEKKKGE</sequence>
<comment type="function">
    <text evidence="1">Carrier of the growing fatty acid chain in fatty acid biosynthesis.</text>
</comment>
<comment type="pathway">
    <text evidence="1">Lipid metabolism; fatty acid biosynthesis.</text>
</comment>
<comment type="subcellular location">
    <subcellularLocation>
        <location evidence="1">Cytoplasm</location>
    </subcellularLocation>
</comment>
<comment type="PTM">
    <text evidence="1">4'-phosphopantetheine is transferred from CoA to a specific serine of apo-ACP by AcpS. This modification is essential for activity because fatty acids are bound in thioester linkage to the sulfhydryl of the prosthetic group.</text>
</comment>
<comment type="similarity">
    <text evidence="1">Belongs to the acyl carrier protein (ACP) family.</text>
</comment>